<accession>P11428</accession>
<comment type="function">
    <text>Destroys radicals which are normally produced within the cells and which are toxic to biological systems.</text>
</comment>
<comment type="catalytic activity">
    <reaction>
        <text>2 superoxide + 2 H(+) = H2O2 + O2</text>
        <dbReference type="Rhea" id="RHEA:20696"/>
        <dbReference type="ChEBI" id="CHEBI:15378"/>
        <dbReference type="ChEBI" id="CHEBI:15379"/>
        <dbReference type="ChEBI" id="CHEBI:16240"/>
        <dbReference type="ChEBI" id="CHEBI:18421"/>
        <dbReference type="EC" id="1.15.1.1"/>
    </reaction>
</comment>
<comment type="cofactor">
    <cofactor evidence="1">
        <name>Cu cation</name>
        <dbReference type="ChEBI" id="CHEBI:23378"/>
    </cofactor>
    <text evidence="1">Binds 1 copper ion per subunit.</text>
</comment>
<comment type="cofactor">
    <cofactor evidence="1">
        <name>Zn(2+)</name>
        <dbReference type="ChEBI" id="CHEBI:29105"/>
    </cofactor>
    <text evidence="1">Binds 1 zinc ion per subunit.</text>
</comment>
<comment type="subunit">
    <text>Homodimer.</text>
</comment>
<comment type="subcellular location">
    <subcellularLocation>
        <location>Cytoplasm</location>
    </subcellularLocation>
</comment>
<comment type="similarity">
    <text evidence="2">Belongs to the Cu-Zn superoxide dismutase family.</text>
</comment>
<reference key="1">
    <citation type="journal article" date="1987" name="Proc. Natl. Acad. Sci. U.S.A.">
        <title>Cloning of cDNA for maize superoxide dismutase 2 (SOD2).</title>
        <authorList>
            <person name="Cannon R.E."/>
            <person name="White J.A."/>
            <person name="Scandalios J.G."/>
        </authorList>
    </citation>
    <scope>NUCLEOTIDE SEQUENCE [MRNA]</scope>
</reference>
<reference key="2">
    <citation type="journal article" date="1987" name="Isozymes Curr. Top. Biol. Med. Res.">
        <title>The superoxide dismutase-2 gene of maize.</title>
        <authorList>
            <person name="Cannon R.E."/>
            <person name="Scandalios J.G."/>
        </authorList>
    </citation>
    <scope>NUCLEOTIDE SEQUENCE [MRNA]</scope>
</reference>
<organism>
    <name type="scientific">Zea mays</name>
    <name type="common">Maize</name>
    <dbReference type="NCBI Taxonomy" id="4577"/>
    <lineage>
        <taxon>Eukaryota</taxon>
        <taxon>Viridiplantae</taxon>
        <taxon>Streptophyta</taxon>
        <taxon>Embryophyta</taxon>
        <taxon>Tracheophyta</taxon>
        <taxon>Spermatophyta</taxon>
        <taxon>Magnoliopsida</taxon>
        <taxon>Liliopsida</taxon>
        <taxon>Poales</taxon>
        <taxon>Poaceae</taxon>
        <taxon>PACMAD clade</taxon>
        <taxon>Panicoideae</taxon>
        <taxon>Andropogonodae</taxon>
        <taxon>Andropogoneae</taxon>
        <taxon>Tripsacinae</taxon>
        <taxon>Zea</taxon>
    </lineage>
</organism>
<evidence type="ECO:0000250" key="1"/>
<evidence type="ECO:0000305" key="2"/>
<protein>
    <recommendedName>
        <fullName>Superoxide dismutase [Cu-Zn] 2</fullName>
        <ecNumber>1.15.1.1</ecNumber>
    </recommendedName>
</protein>
<gene>
    <name type="primary">SODCC.1</name>
    <name type="synonym">SOD2</name>
</gene>
<sequence length="151" mass="15104">MVKAVAVLAGTDVKGTIFFSQEGDGPTTVTGSISGLKPGLHGFHVHALGDTTNGCMSTGPHFNPVGKEHGAPEDEDRHAGDLGNVTAGEDGVVNVNITDSQIPLAGPHSIIGRAVVVHADPDDLGKGGHELSKSTGNAGGRVACGIIGLQG</sequence>
<proteinExistence type="evidence at transcript level"/>
<keyword id="KW-0049">Antioxidant</keyword>
<keyword id="KW-0186">Copper</keyword>
<keyword id="KW-0963">Cytoplasm</keyword>
<keyword id="KW-1015">Disulfide bond</keyword>
<keyword id="KW-0479">Metal-binding</keyword>
<keyword id="KW-0560">Oxidoreductase</keyword>
<keyword id="KW-1185">Reference proteome</keyword>
<keyword id="KW-0862">Zinc</keyword>
<name>SODC2_MAIZE</name>
<feature type="initiator methionine" description="Removed" evidence="1">
    <location>
        <position position="1"/>
    </location>
</feature>
<feature type="chain" id="PRO_0000164141" description="Superoxide dismutase [Cu-Zn] 2">
    <location>
        <begin position="2"/>
        <end position="151"/>
    </location>
</feature>
<feature type="binding site" evidence="1">
    <location>
        <position position="44"/>
    </location>
    <ligand>
        <name>Cu cation</name>
        <dbReference type="ChEBI" id="CHEBI:23378"/>
        <note>catalytic</note>
    </ligand>
</feature>
<feature type="binding site" evidence="1">
    <location>
        <position position="46"/>
    </location>
    <ligand>
        <name>Cu cation</name>
        <dbReference type="ChEBI" id="CHEBI:23378"/>
        <note>catalytic</note>
    </ligand>
</feature>
<feature type="binding site" evidence="1">
    <location>
        <position position="61"/>
    </location>
    <ligand>
        <name>Cu cation</name>
        <dbReference type="ChEBI" id="CHEBI:23378"/>
        <note>catalytic</note>
    </ligand>
</feature>
<feature type="binding site" evidence="1">
    <location>
        <position position="61"/>
    </location>
    <ligand>
        <name>Zn(2+)</name>
        <dbReference type="ChEBI" id="CHEBI:29105"/>
        <note>structural</note>
    </ligand>
</feature>
<feature type="binding site" evidence="1">
    <location>
        <position position="69"/>
    </location>
    <ligand>
        <name>Zn(2+)</name>
        <dbReference type="ChEBI" id="CHEBI:29105"/>
        <note>structural</note>
    </ligand>
</feature>
<feature type="binding site" evidence="1">
    <location>
        <position position="78"/>
    </location>
    <ligand>
        <name>Zn(2+)</name>
        <dbReference type="ChEBI" id="CHEBI:29105"/>
        <note>structural</note>
    </ligand>
</feature>
<feature type="binding site" evidence="1">
    <location>
        <position position="81"/>
    </location>
    <ligand>
        <name>Zn(2+)</name>
        <dbReference type="ChEBI" id="CHEBI:29105"/>
        <note>structural</note>
    </ligand>
</feature>
<feature type="binding site" evidence="1">
    <location>
        <position position="118"/>
    </location>
    <ligand>
        <name>Cu cation</name>
        <dbReference type="ChEBI" id="CHEBI:23378"/>
        <note>catalytic</note>
    </ligand>
</feature>
<feature type="disulfide bond" evidence="1">
    <location>
        <begin position="55"/>
        <end position="144"/>
    </location>
</feature>
<dbReference type="EC" id="1.15.1.1"/>
<dbReference type="EMBL" id="M15175">
    <property type="protein sequence ID" value="AAA33511.1"/>
    <property type="molecule type" value="mRNA"/>
</dbReference>
<dbReference type="EMBL" id="M54936">
    <property type="protein sequence ID" value="AAA33510.1"/>
    <property type="molecule type" value="mRNA"/>
</dbReference>
<dbReference type="PIR" id="A29077">
    <property type="entry name" value="A29077"/>
</dbReference>
<dbReference type="RefSeq" id="NP_001105335.1">
    <property type="nucleotide sequence ID" value="NM_001111865.1"/>
</dbReference>
<dbReference type="RefSeq" id="XP_008651856.1">
    <property type="nucleotide sequence ID" value="XM_008653634.1"/>
</dbReference>
<dbReference type="SMR" id="P11428"/>
<dbReference type="STRING" id="4577.P11428"/>
<dbReference type="PaxDb" id="4577-GRMZM2G025992_P01"/>
<dbReference type="EnsemblPlants" id="Zm00001eb330020_T001">
    <property type="protein sequence ID" value="Zm00001eb330020_P001"/>
    <property type="gene ID" value="Zm00001eb330020"/>
</dbReference>
<dbReference type="EnsemblPlants" id="Zm00001eb330020_T004">
    <property type="protein sequence ID" value="Zm00001eb330020_P004"/>
    <property type="gene ID" value="Zm00001eb330020"/>
</dbReference>
<dbReference type="EnsemblPlants" id="Zm00001eb330020_T006">
    <property type="protein sequence ID" value="Zm00001eb330020_P006"/>
    <property type="gene ID" value="Zm00001eb330020"/>
</dbReference>
<dbReference type="GeneID" id="542260"/>
<dbReference type="Gramene" id="Zm00001eb330020_T001">
    <property type="protein sequence ID" value="Zm00001eb330020_P001"/>
    <property type="gene ID" value="Zm00001eb330020"/>
</dbReference>
<dbReference type="Gramene" id="Zm00001eb330020_T004">
    <property type="protein sequence ID" value="Zm00001eb330020_P004"/>
    <property type="gene ID" value="Zm00001eb330020"/>
</dbReference>
<dbReference type="Gramene" id="Zm00001eb330020_T006">
    <property type="protein sequence ID" value="Zm00001eb330020_P006"/>
    <property type="gene ID" value="Zm00001eb330020"/>
</dbReference>
<dbReference type="KEGG" id="zma:542260"/>
<dbReference type="MaizeGDB" id="47586"/>
<dbReference type="eggNOG" id="KOG0441">
    <property type="taxonomic scope" value="Eukaryota"/>
</dbReference>
<dbReference type="HOGENOM" id="CLU_056632_4_1_1"/>
<dbReference type="InParanoid" id="P11428"/>
<dbReference type="OMA" id="GARYACG"/>
<dbReference type="OrthoDB" id="2015551at2759"/>
<dbReference type="Proteomes" id="UP000007305">
    <property type="component" value="Chromosome 7"/>
</dbReference>
<dbReference type="ExpressionAtlas" id="P11428">
    <property type="expression patterns" value="baseline and differential"/>
</dbReference>
<dbReference type="GO" id="GO:0005737">
    <property type="term" value="C:cytoplasm"/>
    <property type="evidence" value="ECO:0007669"/>
    <property type="project" value="UniProtKB-SubCell"/>
</dbReference>
<dbReference type="GO" id="GO:0005507">
    <property type="term" value="F:copper ion binding"/>
    <property type="evidence" value="ECO:0000318"/>
    <property type="project" value="GO_Central"/>
</dbReference>
<dbReference type="GO" id="GO:0004784">
    <property type="term" value="F:superoxide dismutase activity"/>
    <property type="evidence" value="ECO:0000318"/>
    <property type="project" value="GO_Central"/>
</dbReference>
<dbReference type="GO" id="GO:0019430">
    <property type="term" value="P:removal of superoxide radicals"/>
    <property type="evidence" value="ECO:0000318"/>
    <property type="project" value="GO_Central"/>
</dbReference>
<dbReference type="CDD" id="cd00305">
    <property type="entry name" value="Cu-Zn_Superoxide_Dismutase"/>
    <property type="match status" value="1"/>
</dbReference>
<dbReference type="FunFam" id="2.60.40.200:FF:000001">
    <property type="entry name" value="Superoxide dismutase [Cu-Zn]"/>
    <property type="match status" value="1"/>
</dbReference>
<dbReference type="Gene3D" id="2.60.40.200">
    <property type="entry name" value="Superoxide dismutase, copper/zinc binding domain"/>
    <property type="match status" value="1"/>
</dbReference>
<dbReference type="InterPro" id="IPR036423">
    <property type="entry name" value="SOD-like_Cu/Zn_dom_sf"/>
</dbReference>
<dbReference type="InterPro" id="IPR024134">
    <property type="entry name" value="SOD_Cu/Zn_/chaperone"/>
</dbReference>
<dbReference type="InterPro" id="IPR018152">
    <property type="entry name" value="SOD_Cu/Zn_BS"/>
</dbReference>
<dbReference type="InterPro" id="IPR001424">
    <property type="entry name" value="SOD_Cu_Zn_dom"/>
</dbReference>
<dbReference type="PANTHER" id="PTHR10003">
    <property type="entry name" value="SUPEROXIDE DISMUTASE CU-ZN -RELATED"/>
    <property type="match status" value="1"/>
</dbReference>
<dbReference type="Pfam" id="PF00080">
    <property type="entry name" value="Sod_Cu"/>
    <property type="match status" value="1"/>
</dbReference>
<dbReference type="PRINTS" id="PR00068">
    <property type="entry name" value="CUZNDISMTASE"/>
</dbReference>
<dbReference type="SUPFAM" id="SSF49329">
    <property type="entry name" value="Cu,Zn superoxide dismutase-like"/>
    <property type="match status" value="1"/>
</dbReference>
<dbReference type="PROSITE" id="PS00087">
    <property type="entry name" value="SOD_CU_ZN_1"/>
    <property type="match status" value="1"/>
</dbReference>
<dbReference type="PROSITE" id="PS00332">
    <property type="entry name" value="SOD_CU_ZN_2"/>
    <property type="match status" value="1"/>
</dbReference>